<protein>
    <recommendedName>
        <fullName evidence="2">NADH-quinone oxidoreductase subunit B 2</fullName>
        <ecNumber evidence="2">7.1.1.-</ecNumber>
    </recommendedName>
    <alternativeName>
        <fullName evidence="2">NADH dehydrogenase I subunit B 2</fullName>
    </alternativeName>
    <alternativeName>
        <fullName evidence="2">NDH-1 subunit B 2</fullName>
    </alternativeName>
</protein>
<gene>
    <name evidence="2" type="primary">nuoB2</name>
    <name type="ordered locus">BURPS1106A_3598</name>
</gene>
<organism>
    <name type="scientific">Burkholderia pseudomallei (strain 1106a)</name>
    <dbReference type="NCBI Taxonomy" id="357348"/>
    <lineage>
        <taxon>Bacteria</taxon>
        <taxon>Pseudomonadati</taxon>
        <taxon>Pseudomonadota</taxon>
        <taxon>Betaproteobacteria</taxon>
        <taxon>Burkholderiales</taxon>
        <taxon>Burkholderiaceae</taxon>
        <taxon>Burkholderia</taxon>
        <taxon>pseudomallei group</taxon>
    </lineage>
</organism>
<evidence type="ECO:0000250" key="1"/>
<evidence type="ECO:0000255" key="2">
    <source>
        <dbReference type="HAMAP-Rule" id="MF_01356"/>
    </source>
</evidence>
<evidence type="ECO:0000305" key="3"/>
<accession>A3NZQ8</accession>
<feature type="chain" id="PRO_0000358383" description="NADH-quinone oxidoreductase subunit B 2">
    <location>
        <begin position="1"/>
        <end position="167"/>
    </location>
</feature>
<feature type="binding site" evidence="2">
    <location>
        <position position="39"/>
    </location>
    <ligand>
        <name>[4Fe-4S] cluster</name>
        <dbReference type="ChEBI" id="CHEBI:49883"/>
    </ligand>
</feature>
<feature type="binding site" evidence="2">
    <location>
        <position position="40"/>
    </location>
    <ligand>
        <name>[4Fe-4S] cluster</name>
        <dbReference type="ChEBI" id="CHEBI:49883"/>
    </ligand>
</feature>
<feature type="binding site" evidence="2">
    <location>
        <position position="104"/>
    </location>
    <ligand>
        <name>[4Fe-4S] cluster</name>
        <dbReference type="ChEBI" id="CHEBI:49883"/>
    </ligand>
</feature>
<feature type="binding site" evidence="2">
    <location>
        <position position="134"/>
    </location>
    <ligand>
        <name>[4Fe-4S] cluster</name>
        <dbReference type="ChEBI" id="CHEBI:49883"/>
    </ligand>
</feature>
<reference key="1">
    <citation type="journal article" date="2010" name="Genome Biol. Evol.">
        <title>Continuing evolution of Burkholderia mallei through genome reduction and large-scale rearrangements.</title>
        <authorList>
            <person name="Losada L."/>
            <person name="Ronning C.M."/>
            <person name="DeShazer D."/>
            <person name="Woods D."/>
            <person name="Fedorova N."/>
            <person name="Kim H.S."/>
            <person name="Shabalina S.A."/>
            <person name="Pearson T.R."/>
            <person name="Brinkac L."/>
            <person name="Tan P."/>
            <person name="Nandi T."/>
            <person name="Crabtree J."/>
            <person name="Badger J."/>
            <person name="Beckstrom-Sternberg S."/>
            <person name="Saqib M."/>
            <person name="Schutzer S.E."/>
            <person name="Keim P."/>
            <person name="Nierman W.C."/>
        </authorList>
    </citation>
    <scope>NUCLEOTIDE SEQUENCE [LARGE SCALE GENOMIC DNA]</scope>
    <source>
        <strain>1106a</strain>
    </source>
</reference>
<name>NUOB2_BURP0</name>
<keyword id="KW-0004">4Fe-4S</keyword>
<keyword id="KW-0997">Cell inner membrane</keyword>
<keyword id="KW-1003">Cell membrane</keyword>
<keyword id="KW-0408">Iron</keyword>
<keyword id="KW-0411">Iron-sulfur</keyword>
<keyword id="KW-0472">Membrane</keyword>
<keyword id="KW-0479">Metal-binding</keyword>
<keyword id="KW-0520">NAD</keyword>
<keyword id="KW-0874">Quinone</keyword>
<keyword id="KW-1278">Translocase</keyword>
<keyword id="KW-0813">Transport</keyword>
<keyword id="KW-0830">Ubiquinone</keyword>
<comment type="function">
    <text evidence="1">NDH-1 shuttles electrons from NADH, via FMN and iron-sulfur (Fe-S) centers, to quinones in the respiratory chain. Couples the redox reaction to proton translocation (for every two electrons transferred, four hydrogen ions are translocated across the cytoplasmic membrane), and thus conserves the redox energy in a proton gradient (By similarity).</text>
</comment>
<comment type="catalytic activity">
    <reaction evidence="2">
        <text>a quinone + NADH + 5 H(+)(in) = a quinol + NAD(+) + 4 H(+)(out)</text>
        <dbReference type="Rhea" id="RHEA:57888"/>
        <dbReference type="ChEBI" id="CHEBI:15378"/>
        <dbReference type="ChEBI" id="CHEBI:24646"/>
        <dbReference type="ChEBI" id="CHEBI:57540"/>
        <dbReference type="ChEBI" id="CHEBI:57945"/>
        <dbReference type="ChEBI" id="CHEBI:132124"/>
    </reaction>
</comment>
<comment type="cofactor">
    <cofactor evidence="2">
        <name>[4Fe-4S] cluster</name>
        <dbReference type="ChEBI" id="CHEBI:49883"/>
    </cofactor>
    <text evidence="2">Binds 1 [4Fe-4S] cluster.</text>
</comment>
<comment type="subunit">
    <text evidence="2">NDH-1 is composed of 14 different subunits. Subunits NuoB, C, D, E, F, and G constitute the peripheral sector of the complex.</text>
</comment>
<comment type="subcellular location">
    <subcellularLocation>
        <location evidence="2">Cell inner membrane</location>
        <topology evidence="2">Peripheral membrane protein</topology>
        <orientation evidence="2">Cytoplasmic side</orientation>
    </subcellularLocation>
</comment>
<comment type="similarity">
    <text evidence="2">Belongs to the complex I 20 kDa subunit family.</text>
</comment>
<comment type="sequence caution" evidence="3">
    <conflict type="erroneous initiation">
        <sequence resource="EMBL-CDS" id="ABN91648"/>
    </conflict>
</comment>
<proteinExistence type="inferred from homology"/>
<sequence length="167" mass="18469">MANHPLTLEKDGFIVTTLDAAMAAAQKNSLWYMTFGLACCAVEMMHAAGARYDMDRFGMIPRASPRQCDLMIVAGTLTNKMAPAMRRVYDQMAEPRYVVSMGSCANGGGYYHYSYSVVRGCDRIVPVDVYVPGCPPTAEALVYGLMQLQRKVAERSTHSRPKLFARP</sequence>
<dbReference type="EC" id="7.1.1.-" evidence="2"/>
<dbReference type="EMBL" id="CP000572">
    <property type="protein sequence ID" value="ABN91648.1"/>
    <property type="status" value="ALT_INIT"/>
    <property type="molecule type" value="Genomic_DNA"/>
</dbReference>
<dbReference type="RefSeq" id="WP_004186860.1">
    <property type="nucleotide sequence ID" value="NC_009076.1"/>
</dbReference>
<dbReference type="SMR" id="A3NZQ8"/>
<dbReference type="KEGG" id="bpl:BURPS1106A_3598"/>
<dbReference type="HOGENOM" id="CLU_055737_0_0_4"/>
<dbReference type="Proteomes" id="UP000006738">
    <property type="component" value="Chromosome I"/>
</dbReference>
<dbReference type="GO" id="GO:0005886">
    <property type="term" value="C:plasma membrane"/>
    <property type="evidence" value="ECO:0007669"/>
    <property type="project" value="UniProtKB-SubCell"/>
</dbReference>
<dbReference type="GO" id="GO:0045271">
    <property type="term" value="C:respiratory chain complex I"/>
    <property type="evidence" value="ECO:0007669"/>
    <property type="project" value="TreeGrafter"/>
</dbReference>
<dbReference type="GO" id="GO:0051539">
    <property type="term" value="F:4 iron, 4 sulfur cluster binding"/>
    <property type="evidence" value="ECO:0007669"/>
    <property type="project" value="UniProtKB-KW"/>
</dbReference>
<dbReference type="GO" id="GO:0005506">
    <property type="term" value="F:iron ion binding"/>
    <property type="evidence" value="ECO:0007669"/>
    <property type="project" value="UniProtKB-UniRule"/>
</dbReference>
<dbReference type="GO" id="GO:0008137">
    <property type="term" value="F:NADH dehydrogenase (ubiquinone) activity"/>
    <property type="evidence" value="ECO:0007669"/>
    <property type="project" value="InterPro"/>
</dbReference>
<dbReference type="GO" id="GO:0050136">
    <property type="term" value="F:NADH:ubiquinone reductase (non-electrogenic) activity"/>
    <property type="evidence" value="ECO:0007669"/>
    <property type="project" value="UniProtKB-UniRule"/>
</dbReference>
<dbReference type="GO" id="GO:0048038">
    <property type="term" value="F:quinone binding"/>
    <property type="evidence" value="ECO:0007669"/>
    <property type="project" value="UniProtKB-KW"/>
</dbReference>
<dbReference type="GO" id="GO:0009060">
    <property type="term" value="P:aerobic respiration"/>
    <property type="evidence" value="ECO:0007669"/>
    <property type="project" value="TreeGrafter"/>
</dbReference>
<dbReference type="GO" id="GO:0015990">
    <property type="term" value="P:electron transport coupled proton transport"/>
    <property type="evidence" value="ECO:0007669"/>
    <property type="project" value="TreeGrafter"/>
</dbReference>
<dbReference type="FunFam" id="3.40.50.12280:FF:000001">
    <property type="entry name" value="NADH-quinone oxidoreductase subunit B 2"/>
    <property type="match status" value="1"/>
</dbReference>
<dbReference type="Gene3D" id="3.40.50.12280">
    <property type="match status" value="1"/>
</dbReference>
<dbReference type="HAMAP" id="MF_01356">
    <property type="entry name" value="NDH1_NuoB"/>
    <property type="match status" value="1"/>
</dbReference>
<dbReference type="InterPro" id="IPR006137">
    <property type="entry name" value="NADH_UbQ_OxRdtase-like_20kDa"/>
</dbReference>
<dbReference type="InterPro" id="IPR006138">
    <property type="entry name" value="NADH_UQ_OxRdtase_20Kd_su"/>
</dbReference>
<dbReference type="NCBIfam" id="TIGR01957">
    <property type="entry name" value="nuoB_fam"/>
    <property type="match status" value="1"/>
</dbReference>
<dbReference type="NCBIfam" id="NF005012">
    <property type="entry name" value="PRK06411.1"/>
    <property type="match status" value="1"/>
</dbReference>
<dbReference type="PANTHER" id="PTHR11995">
    <property type="entry name" value="NADH DEHYDROGENASE"/>
    <property type="match status" value="1"/>
</dbReference>
<dbReference type="PANTHER" id="PTHR11995:SF14">
    <property type="entry name" value="NADH DEHYDROGENASE [UBIQUINONE] IRON-SULFUR PROTEIN 7, MITOCHONDRIAL"/>
    <property type="match status" value="1"/>
</dbReference>
<dbReference type="Pfam" id="PF01058">
    <property type="entry name" value="Oxidored_q6"/>
    <property type="match status" value="1"/>
</dbReference>
<dbReference type="SUPFAM" id="SSF56770">
    <property type="entry name" value="HydA/Nqo6-like"/>
    <property type="match status" value="1"/>
</dbReference>
<dbReference type="PROSITE" id="PS01150">
    <property type="entry name" value="COMPLEX1_20K"/>
    <property type="match status" value="1"/>
</dbReference>